<keyword id="KW-0227">DNA damage</keyword>
<keyword id="KW-0234">DNA repair</keyword>
<keyword id="KW-0235">DNA replication</keyword>
<keyword id="KW-0255">Endonuclease</keyword>
<keyword id="KW-0269">Exonuclease</keyword>
<keyword id="KW-0378">Hydrolase</keyword>
<keyword id="KW-0460">Magnesium</keyword>
<keyword id="KW-0479">Metal-binding</keyword>
<keyword id="KW-0496">Mitochondrion</keyword>
<keyword id="KW-0540">Nuclease</keyword>
<keyword id="KW-0539">Nucleus</keyword>
<keyword id="KW-0597">Phosphoprotein</keyword>
<keyword id="KW-1185">Reference proteome</keyword>
<proteinExistence type="evidence at transcript level"/>
<accession>Q5I4H3</accession>
<name>FEN1_XIPMA</name>
<sequence>MGIHGLAKLIADHAPGAIKEQDIKNYFGRKIAIDASMCIYQFLIAVRQDGNVLQSEDGETTSHLMGMFYRTIRMLENGIKPVYVFDGKPPQLKSAELEKRGERRAEAEKMLAKAQELGEQENIDKFSKRLVKVTKQHNDDCKKLLTLMGVPYIEAPCEAEASCAALVKEGKVFATATEDMDGLTFGTNVLLRHLTASEAKKLPVQEFHFNRILQDIGLTSEQFIDLCILLGCDYCGTIKGIGPKRAIDLIRQHGSIEEILENIDTSKHPAPEDWLYKEARNLFLKPEVVDSSTVDLKWREPDEEALIQFMCSEKQFSEDRIRNGCKKMMKSRQGSTQGRLDSFFSVTGSLSSKRKEPETKGSAKKKQKTGATPGKFRKGK</sequence>
<organism>
    <name type="scientific">Xiphophorus maculatus</name>
    <name type="common">Southern platyfish</name>
    <name type="synonym">Platypoecilus maculatus</name>
    <dbReference type="NCBI Taxonomy" id="8083"/>
    <lineage>
        <taxon>Eukaryota</taxon>
        <taxon>Metazoa</taxon>
        <taxon>Chordata</taxon>
        <taxon>Craniata</taxon>
        <taxon>Vertebrata</taxon>
        <taxon>Euteleostomi</taxon>
        <taxon>Actinopterygii</taxon>
        <taxon>Neopterygii</taxon>
        <taxon>Teleostei</taxon>
        <taxon>Neoteleostei</taxon>
        <taxon>Acanthomorphata</taxon>
        <taxon>Ovalentaria</taxon>
        <taxon>Atherinomorphae</taxon>
        <taxon>Cyprinodontiformes</taxon>
        <taxon>Poeciliidae</taxon>
        <taxon>Poeciliinae</taxon>
        <taxon>Xiphophorus</taxon>
    </lineage>
</organism>
<comment type="function">
    <text evidence="1 3">Structure-specific nuclease with 5'-flap endonuclease and 5'-3' exonuclease activities involved in DNA replication and repair. During DNA replication, cleaves the 5'-overhanging flap structure that is generated by displacement synthesis when DNA polymerase encounters the 5'-end of a downstream Okazaki fragment. It enters the flap from the 5'-end and then tracks to cleave the flap base, leaving a nick for ligation. Also involved in the long patch base excision repair (LP-BER) pathway, by cleaving within the apurinic/apyrimidinic (AP) site-terminated flap. Acts as a genome stabilization factor that prevents flaps from equilibrating into structures that lead to duplications and deletions. Also possesses 5'-3' exonuclease activity on nicked or gapped double-stranded DNA, and exhibits RNase H activity. Also involved in replication and repair of rDNA and in repairing mitochondrial DNA.</text>
</comment>
<comment type="cofactor">
    <cofactor evidence="1">
        <name>Mg(2+)</name>
        <dbReference type="ChEBI" id="CHEBI:18420"/>
    </cofactor>
    <text evidence="1">Binds 2 magnesium ions per subunit. They probably participate in the reaction catalyzed by the enzyme. May bind an additional third magnesium ion after substrate binding.</text>
</comment>
<comment type="subunit">
    <text evidence="1">Interacts with PCNA. Three molecules of fen1 bind to one PCNA trimer with each molecule binding to one PCNA monomer. PCNA stimulates the nuclease activity without altering cleavage specificity.</text>
</comment>
<comment type="subcellular location">
    <subcellularLocation>
        <location evidence="1">Nucleus</location>
        <location evidence="1">Nucleolus</location>
    </subcellularLocation>
    <subcellularLocation>
        <location evidence="1">Nucleus</location>
        <location evidence="1">Nucleoplasm</location>
    </subcellularLocation>
    <subcellularLocation>
        <location evidence="1">Mitochondrion</location>
    </subcellularLocation>
    <text evidence="1">Resides mostly in the nucleoli and relocalizes to the nucleoplasm upon DNA damage.</text>
</comment>
<comment type="PTM">
    <text evidence="1">Phosphorylated. Phosphorylation upon DNA damage induces relocalization to the nuclear plasma.</text>
</comment>
<comment type="similarity">
    <text evidence="1">Belongs to the XPG/RAD2 endonuclease family. FEN1 subfamily.</text>
</comment>
<feature type="chain" id="PRO_0000403492" description="Flap endonuclease 1">
    <location>
        <begin position="1"/>
        <end position="380"/>
    </location>
</feature>
<feature type="region of interest" description="N-domain">
    <location>
        <begin position="1"/>
        <end position="104"/>
    </location>
</feature>
<feature type="region of interest" description="I-domain">
    <location>
        <begin position="122"/>
        <end position="253"/>
    </location>
</feature>
<feature type="region of interest" description="Disordered" evidence="2">
    <location>
        <begin position="327"/>
        <end position="380"/>
    </location>
</feature>
<feature type="region of interest" description="Interaction with PCNA" evidence="1">
    <location>
        <begin position="336"/>
        <end position="344"/>
    </location>
</feature>
<feature type="compositionally biased region" description="Polar residues" evidence="2">
    <location>
        <begin position="332"/>
        <end position="351"/>
    </location>
</feature>
<feature type="binding site" evidence="1">
    <location>
        <position position="34"/>
    </location>
    <ligand>
        <name>Mg(2+)</name>
        <dbReference type="ChEBI" id="CHEBI:18420"/>
        <label>1</label>
    </ligand>
</feature>
<feature type="binding site" evidence="1">
    <location>
        <position position="47"/>
    </location>
    <ligand>
        <name>DNA</name>
        <dbReference type="ChEBI" id="CHEBI:16991"/>
    </ligand>
</feature>
<feature type="binding site" evidence="1">
    <location>
        <position position="70"/>
    </location>
    <ligand>
        <name>DNA</name>
        <dbReference type="ChEBI" id="CHEBI:16991"/>
    </ligand>
</feature>
<feature type="binding site" evidence="1">
    <location>
        <position position="86"/>
    </location>
    <ligand>
        <name>Mg(2+)</name>
        <dbReference type="ChEBI" id="CHEBI:18420"/>
        <label>1</label>
    </ligand>
</feature>
<feature type="binding site" evidence="1">
    <location>
        <position position="158"/>
    </location>
    <ligand>
        <name>DNA</name>
        <dbReference type="ChEBI" id="CHEBI:16991"/>
    </ligand>
</feature>
<feature type="binding site" evidence="1">
    <location>
        <position position="158"/>
    </location>
    <ligand>
        <name>Mg(2+)</name>
        <dbReference type="ChEBI" id="CHEBI:18420"/>
        <label>1</label>
    </ligand>
</feature>
<feature type="binding site" evidence="1">
    <location>
        <position position="160"/>
    </location>
    <ligand>
        <name>Mg(2+)</name>
        <dbReference type="ChEBI" id="CHEBI:18420"/>
        <label>1</label>
    </ligand>
</feature>
<feature type="binding site" evidence="1">
    <location>
        <position position="179"/>
    </location>
    <ligand>
        <name>Mg(2+)</name>
        <dbReference type="ChEBI" id="CHEBI:18420"/>
        <label>2</label>
    </ligand>
</feature>
<feature type="binding site" evidence="1">
    <location>
        <position position="181"/>
    </location>
    <ligand>
        <name>Mg(2+)</name>
        <dbReference type="ChEBI" id="CHEBI:18420"/>
        <label>2</label>
    </ligand>
</feature>
<feature type="binding site" evidence="1">
    <location>
        <position position="231"/>
    </location>
    <ligand>
        <name>DNA</name>
        <dbReference type="ChEBI" id="CHEBI:16991"/>
    </ligand>
</feature>
<feature type="binding site" evidence="1">
    <location>
        <position position="233"/>
    </location>
    <ligand>
        <name>DNA</name>
        <dbReference type="ChEBI" id="CHEBI:16991"/>
    </ligand>
</feature>
<feature type="binding site" evidence="1">
    <location>
        <position position="233"/>
    </location>
    <ligand>
        <name>Mg(2+)</name>
        <dbReference type="ChEBI" id="CHEBI:18420"/>
        <label>2</label>
    </ligand>
</feature>
<gene>
    <name type="primary">fen1</name>
</gene>
<protein>
    <recommendedName>
        <fullName evidence="1">Flap endonuclease 1</fullName>
        <shortName evidence="1">FEN-1</shortName>
        <ecNumber evidence="1">3.1.-.-</ecNumber>
    </recommendedName>
    <alternativeName>
        <fullName evidence="1">Flap structure-specific endonuclease 1</fullName>
    </alternativeName>
</protein>
<reference key="1">
    <citation type="journal article" date="2004" name="Zebrafish">
        <title>Characterization and purification of flap endonuclease-1 (xiFEN-1) from Xiphophorus maculatus.</title>
        <authorList>
            <person name="Ruymgaart A.P."/>
            <person name="Heater S.J."/>
            <person name="Oehlers L.P. Jr."/>
            <person name="Rains J.D."/>
            <person name="Walter R.B."/>
        </authorList>
    </citation>
    <scope>NUCLEOTIDE SEQUENCE [GENOMIC DNA / MRNA]</scope>
    <scope>FUNCTION</scope>
    <source>
        <strain>Jp 163 A</strain>
    </source>
</reference>
<evidence type="ECO:0000255" key="1">
    <source>
        <dbReference type="HAMAP-Rule" id="MF_03140"/>
    </source>
</evidence>
<evidence type="ECO:0000256" key="2">
    <source>
        <dbReference type="SAM" id="MobiDB-lite"/>
    </source>
</evidence>
<evidence type="ECO:0000269" key="3">
    <source>
    </source>
</evidence>
<dbReference type="EC" id="3.1.-.-" evidence="1"/>
<dbReference type="EMBL" id="AY855347">
    <property type="protein sequence ID" value="AAW55636.1"/>
    <property type="molecule type" value="mRNA"/>
</dbReference>
<dbReference type="EMBL" id="AY855348">
    <property type="protein sequence ID" value="AAW55637.1"/>
    <property type="molecule type" value="Genomic_DNA"/>
</dbReference>
<dbReference type="RefSeq" id="NP_001273228.1">
    <property type="nucleotide sequence ID" value="NM_001286299.1"/>
</dbReference>
<dbReference type="RefSeq" id="XP_014325945.1">
    <property type="nucleotide sequence ID" value="XM_014470459.2"/>
</dbReference>
<dbReference type="SMR" id="Q5I4H3"/>
<dbReference type="FunCoup" id="Q5I4H3">
    <property type="interactions" value="1715"/>
</dbReference>
<dbReference type="STRING" id="8083.ENSXMAP00000006136"/>
<dbReference type="Ensembl" id="ENSXMAT00000006142.2">
    <property type="protein sequence ID" value="ENSXMAP00000006136.1"/>
    <property type="gene ID" value="ENSXMAG00000006103.2"/>
</dbReference>
<dbReference type="GeneID" id="102228373"/>
<dbReference type="KEGG" id="xma:102228373"/>
<dbReference type="CTD" id="2237"/>
<dbReference type="eggNOG" id="KOG2519">
    <property type="taxonomic scope" value="Eukaryota"/>
</dbReference>
<dbReference type="GeneTree" id="ENSGT00940000155807"/>
<dbReference type="HOGENOM" id="CLU_032444_2_0_1"/>
<dbReference type="InParanoid" id="Q5I4H3"/>
<dbReference type="OMA" id="MGIPWVQ"/>
<dbReference type="OrthoDB" id="1937206at2759"/>
<dbReference type="Proteomes" id="UP000002852">
    <property type="component" value="Unassembled WGS sequence"/>
</dbReference>
<dbReference type="GO" id="GO:0005739">
    <property type="term" value="C:mitochondrion"/>
    <property type="evidence" value="ECO:0007669"/>
    <property type="project" value="UniProtKB-SubCell"/>
</dbReference>
<dbReference type="GO" id="GO:0005730">
    <property type="term" value="C:nucleolus"/>
    <property type="evidence" value="ECO:0007669"/>
    <property type="project" value="UniProtKB-SubCell"/>
</dbReference>
<dbReference type="GO" id="GO:0005654">
    <property type="term" value="C:nucleoplasm"/>
    <property type="evidence" value="ECO:0007669"/>
    <property type="project" value="UniProtKB-SubCell"/>
</dbReference>
<dbReference type="GO" id="GO:0008409">
    <property type="term" value="F:5'-3' exonuclease activity"/>
    <property type="evidence" value="ECO:0007669"/>
    <property type="project" value="UniProtKB-UniRule"/>
</dbReference>
<dbReference type="GO" id="GO:0017108">
    <property type="term" value="F:5'-flap endonuclease activity"/>
    <property type="evidence" value="ECO:0007669"/>
    <property type="project" value="UniProtKB-UniRule"/>
</dbReference>
<dbReference type="GO" id="GO:0003677">
    <property type="term" value="F:DNA binding"/>
    <property type="evidence" value="ECO:0007669"/>
    <property type="project" value="UniProtKB-UniRule"/>
</dbReference>
<dbReference type="GO" id="GO:0000287">
    <property type="term" value="F:magnesium ion binding"/>
    <property type="evidence" value="ECO:0007669"/>
    <property type="project" value="UniProtKB-UniRule"/>
</dbReference>
<dbReference type="GO" id="GO:0030145">
    <property type="term" value="F:manganese ion binding"/>
    <property type="evidence" value="ECO:0007669"/>
    <property type="project" value="TreeGrafter"/>
</dbReference>
<dbReference type="GO" id="GO:0004523">
    <property type="term" value="F:RNA-DNA hybrid ribonuclease activity"/>
    <property type="evidence" value="ECO:0007669"/>
    <property type="project" value="TreeGrafter"/>
</dbReference>
<dbReference type="GO" id="GO:0006284">
    <property type="term" value="P:base-excision repair"/>
    <property type="evidence" value="ECO:0007669"/>
    <property type="project" value="UniProtKB-UniRule"/>
</dbReference>
<dbReference type="GO" id="GO:0043137">
    <property type="term" value="P:DNA replication, removal of RNA primer"/>
    <property type="evidence" value="ECO:0007669"/>
    <property type="project" value="UniProtKB-UniRule"/>
</dbReference>
<dbReference type="GO" id="GO:0060041">
    <property type="term" value="P:retina development in camera-type eye"/>
    <property type="evidence" value="ECO:0007669"/>
    <property type="project" value="Ensembl"/>
</dbReference>
<dbReference type="CDD" id="cd09867">
    <property type="entry name" value="PIN_FEN1"/>
    <property type="match status" value="1"/>
</dbReference>
<dbReference type="FunFam" id="1.10.150.20:FF:000009">
    <property type="entry name" value="Flap endonuclease 1"/>
    <property type="match status" value="1"/>
</dbReference>
<dbReference type="FunFam" id="3.40.50.1010:FF:000003">
    <property type="entry name" value="Flap endonuclease 1"/>
    <property type="match status" value="1"/>
</dbReference>
<dbReference type="Gene3D" id="1.10.150.20">
    <property type="entry name" value="5' to 3' exonuclease, C-terminal subdomain"/>
    <property type="match status" value="1"/>
</dbReference>
<dbReference type="Gene3D" id="3.40.50.1010">
    <property type="entry name" value="5'-nuclease"/>
    <property type="match status" value="1"/>
</dbReference>
<dbReference type="HAMAP" id="MF_00614">
    <property type="entry name" value="Fen"/>
    <property type="match status" value="1"/>
</dbReference>
<dbReference type="InterPro" id="IPR002421">
    <property type="entry name" value="5-3_exonuclease"/>
</dbReference>
<dbReference type="InterPro" id="IPR036279">
    <property type="entry name" value="5-3_exonuclease_C_sf"/>
</dbReference>
<dbReference type="InterPro" id="IPR023426">
    <property type="entry name" value="Flap_endonuc"/>
</dbReference>
<dbReference type="InterPro" id="IPR008918">
    <property type="entry name" value="HhH2"/>
</dbReference>
<dbReference type="InterPro" id="IPR029060">
    <property type="entry name" value="PIN-like_dom_sf"/>
</dbReference>
<dbReference type="InterPro" id="IPR006086">
    <property type="entry name" value="XPG-I_dom"/>
</dbReference>
<dbReference type="InterPro" id="IPR006084">
    <property type="entry name" value="XPG/Rad2"/>
</dbReference>
<dbReference type="InterPro" id="IPR019974">
    <property type="entry name" value="XPG_CS"/>
</dbReference>
<dbReference type="InterPro" id="IPR006085">
    <property type="entry name" value="XPG_DNA_repair_N"/>
</dbReference>
<dbReference type="PANTHER" id="PTHR11081:SF51">
    <property type="entry name" value="FLAP ENDONUCLEASE 1"/>
    <property type="match status" value="1"/>
</dbReference>
<dbReference type="PANTHER" id="PTHR11081">
    <property type="entry name" value="FLAP ENDONUCLEASE FAMILY MEMBER"/>
    <property type="match status" value="1"/>
</dbReference>
<dbReference type="Pfam" id="PF00867">
    <property type="entry name" value="XPG_I"/>
    <property type="match status" value="1"/>
</dbReference>
<dbReference type="Pfam" id="PF00752">
    <property type="entry name" value="XPG_N"/>
    <property type="match status" value="1"/>
</dbReference>
<dbReference type="PRINTS" id="PR00853">
    <property type="entry name" value="XPGRADSUPER"/>
</dbReference>
<dbReference type="SMART" id="SM00475">
    <property type="entry name" value="53EXOc"/>
    <property type="match status" value="1"/>
</dbReference>
<dbReference type="SMART" id="SM00279">
    <property type="entry name" value="HhH2"/>
    <property type="match status" value="1"/>
</dbReference>
<dbReference type="SMART" id="SM00484">
    <property type="entry name" value="XPGI"/>
    <property type="match status" value="1"/>
</dbReference>
<dbReference type="SMART" id="SM00485">
    <property type="entry name" value="XPGN"/>
    <property type="match status" value="1"/>
</dbReference>
<dbReference type="SUPFAM" id="SSF47807">
    <property type="entry name" value="5' to 3' exonuclease, C-terminal subdomain"/>
    <property type="match status" value="1"/>
</dbReference>
<dbReference type="SUPFAM" id="SSF88723">
    <property type="entry name" value="PIN domain-like"/>
    <property type="match status" value="1"/>
</dbReference>
<dbReference type="PROSITE" id="PS00841">
    <property type="entry name" value="XPG_1"/>
    <property type="match status" value="1"/>
</dbReference>
<dbReference type="PROSITE" id="PS00842">
    <property type="entry name" value="XPG_2"/>
    <property type="match status" value="1"/>
</dbReference>